<organism>
    <name type="scientific">Branchiostoma lanceolatum</name>
    <name type="common">Common lancelet</name>
    <name type="synonym">Amphioxus lanceolatum</name>
    <dbReference type="NCBI Taxonomy" id="7740"/>
    <lineage>
        <taxon>Eukaryota</taxon>
        <taxon>Metazoa</taxon>
        <taxon>Chordata</taxon>
        <taxon>Cephalochordata</taxon>
        <taxon>Leptocardii</taxon>
        <taxon>Amphioxiformes</taxon>
        <taxon>Branchiostomatidae</taxon>
        <taxon>Branchiostoma</taxon>
    </lineage>
</organism>
<proteinExistence type="evidence at transcript level"/>
<accession>O02466</accession>
<feature type="signal peptide" evidence="2">
    <location>
        <begin position="1"/>
        <end position="29"/>
    </location>
</feature>
<feature type="chain" id="PRO_0000016711" description="Insulin-like peptide receptor alpha chain" evidence="2">
    <location>
        <begin position="30"/>
        <end position="716"/>
    </location>
</feature>
<feature type="chain" id="PRO_0000016713" description="Insulin-like peptide receptor beta chain" evidence="2">
    <location>
        <begin position="721"/>
        <end position="1363"/>
    </location>
</feature>
<feature type="topological domain" description="Extracellular" evidence="2">
    <location>
        <begin position="721"/>
        <end position="928"/>
    </location>
</feature>
<feature type="transmembrane region" description="Helical" evidence="2">
    <location>
        <begin position="929"/>
        <end position="949"/>
    </location>
</feature>
<feature type="topological domain" description="Cytoplasmic" evidence="2">
    <location>
        <begin position="950"/>
        <end position="1363"/>
    </location>
</feature>
<feature type="domain" description="Fibronectin type-III 1" evidence="4">
    <location>
        <begin position="473"/>
        <end position="586"/>
    </location>
</feature>
<feature type="domain" description="Fibronectin type-III 2" evidence="4">
    <location>
        <begin position="590"/>
        <end position="680"/>
    </location>
</feature>
<feature type="domain" description="Fibronectin type-III 3" evidence="4">
    <location>
        <begin position="712"/>
        <end position="804"/>
    </location>
</feature>
<feature type="domain" description="Fibronectin type-III 4" evidence="4">
    <location>
        <begin position="813"/>
        <end position="912"/>
    </location>
</feature>
<feature type="domain" description="Protein kinase" evidence="3">
    <location>
        <begin position="994"/>
        <end position="1283"/>
    </location>
</feature>
<feature type="region of interest" description="Disordered" evidence="6">
    <location>
        <begin position="739"/>
        <end position="759"/>
    </location>
</feature>
<feature type="region of interest" description="Disordered" evidence="6">
    <location>
        <begin position="1091"/>
        <end position="1117"/>
    </location>
</feature>
<feature type="region of interest" description="Disordered" evidence="6">
    <location>
        <begin position="1316"/>
        <end position="1363"/>
    </location>
</feature>
<feature type="compositionally biased region" description="Low complexity" evidence="6">
    <location>
        <begin position="1322"/>
        <end position="1331"/>
    </location>
</feature>
<feature type="compositionally biased region" description="Polar residues" evidence="6">
    <location>
        <begin position="1343"/>
        <end position="1353"/>
    </location>
</feature>
<feature type="active site" description="Proton acceptor" evidence="3 5">
    <location>
        <position position="1148"/>
    </location>
</feature>
<feature type="binding site" evidence="3">
    <location>
        <begin position="1000"/>
        <end position="1008"/>
    </location>
    <ligand>
        <name>ATP</name>
        <dbReference type="ChEBI" id="CHEBI:30616"/>
    </ligand>
</feature>
<feature type="binding site" evidence="3">
    <location>
        <position position="1028"/>
    </location>
    <ligand>
        <name>ATP</name>
        <dbReference type="ChEBI" id="CHEBI:30616"/>
    </ligand>
</feature>
<feature type="modified residue" description="Phosphotyrosine; by autocatalysis" evidence="1">
    <location>
        <position position="1174"/>
    </location>
</feature>
<feature type="glycosylation site" description="N-linked (GlcNAc...) asparagine" evidence="2">
    <location>
        <position position="51"/>
    </location>
</feature>
<feature type="glycosylation site" description="N-linked (GlcNAc...) asparagine" evidence="2">
    <location>
        <position position="97"/>
    </location>
</feature>
<feature type="glycosylation site" description="N-linked (GlcNAc...) asparagine" evidence="2">
    <location>
        <position position="137"/>
    </location>
</feature>
<feature type="glycosylation site" description="N-linked (GlcNAc...) asparagine" evidence="2">
    <location>
        <position position="278"/>
    </location>
</feature>
<feature type="glycosylation site" description="N-linked (GlcNAc...) asparagine" evidence="2">
    <location>
        <position position="483"/>
    </location>
</feature>
<feature type="glycosylation site" description="N-linked (GlcNAc...) asparagine" evidence="2">
    <location>
        <position position="599"/>
    </location>
</feature>
<feature type="glycosylation site" description="N-linked (GlcNAc...) asparagine" evidence="2">
    <location>
        <position position="617"/>
    </location>
</feature>
<feature type="glycosylation site" description="N-linked (GlcNAc...) asparagine" evidence="2">
    <location>
        <position position="665"/>
    </location>
</feature>
<feature type="glycosylation site" description="N-linked (GlcNAc...) asparagine" evidence="2">
    <location>
        <position position="666"/>
    </location>
</feature>
<feature type="glycosylation site" description="N-linked (GlcNAc...) asparagine" evidence="2">
    <location>
        <position position="711"/>
    </location>
</feature>
<feature type="glycosylation site" description="N-linked (GlcNAc...) asparagine" evidence="2">
    <location>
        <position position="732"/>
    </location>
</feature>
<feature type="glycosylation site" description="N-linked (GlcNAc...) asparagine" evidence="2">
    <location>
        <position position="736"/>
    </location>
</feature>
<feature type="glycosylation site" description="N-linked (GlcNAc...) asparagine" evidence="2">
    <location>
        <position position="743"/>
    </location>
</feature>
<feature type="glycosylation site" description="N-linked (GlcNAc...) asparagine" evidence="2">
    <location>
        <position position="816"/>
    </location>
</feature>
<feature type="glycosylation site" description="N-linked (GlcNAc...) asparagine" evidence="2">
    <location>
        <position position="885"/>
    </location>
</feature>
<feature type="glycosylation site" description="N-linked (GlcNAc...) asparagine" evidence="2">
    <location>
        <position position="898"/>
    </location>
</feature>
<evidence type="ECO:0000250" key="1"/>
<evidence type="ECO:0000255" key="2"/>
<evidence type="ECO:0000255" key="3">
    <source>
        <dbReference type="PROSITE-ProRule" id="PRU00159"/>
    </source>
</evidence>
<evidence type="ECO:0000255" key="4">
    <source>
        <dbReference type="PROSITE-ProRule" id="PRU00316"/>
    </source>
</evidence>
<evidence type="ECO:0000255" key="5">
    <source>
        <dbReference type="PROSITE-ProRule" id="PRU10028"/>
    </source>
</evidence>
<evidence type="ECO:0000256" key="6">
    <source>
        <dbReference type="SAM" id="MobiDB-lite"/>
    </source>
</evidence>
<keyword id="KW-0067">ATP-binding</keyword>
<keyword id="KW-0165">Cleavage on pair of basic residues</keyword>
<keyword id="KW-1015">Disulfide bond</keyword>
<keyword id="KW-0325">Glycoprotein</keyword>
<keyword id="KW-0418">Kinase</keyword>
<keyword id="KW-0464">Manganese</keyword>
<keyword id="KW-0472">Membrane</keyword>
<keyword id="KW-0479">Metal-binding</keyword>
<keyword id="KW-0547">Nucleotide-binding</keyword>
<keyword id="KW-0597">Phosphoprotein</keyword>
<keyword id="KW-0675">Receptor</keyword>
<keyword id="KW-0677">Repeat</keyword>
<keyword id="KW-0732">Signal</keyword>
<keyword id="KW-0808">Transferase</keyword>
<keyword id="KW-0812">Transmembrane</keyword>
<keyword id="KW-1133">Transmembrane helix</keyword>
<keyword id="KW-0829">Tyrosine-protein kinase</keyword>
<name>ILPR_BRALA</name>
<comment type="function">
    <text>This receptor binds to the insulin related peptide and has a tyrosine-protein kinase activity.</text>
</comment>
<comment type="catalytic activity">
    <reaction evidence="5">
        <text>L-tyrosyl-[protein] + ATP = O-phospho-L-tyrosyl-[protein] + ADP + H(+)</text>
        <dbReference type="Rhea" id="RHEA:10596"/>
        <dbReference type="Rhea" id="RHEA-COMP:10136"/>
        <dbReference type="Rhea" id="RHEA-COMP:20101"/>
        <dbReference type="ChEBI" id="CHEBI:15378"/>
        <dbReference type="ChEBI" id="CHEBI:30616"/>
        <dbReference type="ChEBI" id="CHEBI:46858"/>
        <dbReference type="ChEBI" id="CHEBI:61978"/>
        <dbReference type="ChEBI" id="CHEBI:456216"/>
        <dbReference type="EC" id="2.7.10.1"/>
    </reaction>
</comment>
<comment type="cofactor">
    <cofactor evidence="1">
        <name>Mn(2+)</name>
        <dbReference type="ChEBI" id="CHEBI:29035"/>
    </cofactor>
</comment>
<comment type="subunit">
    <text evidence="1">Probable tetramer of 2 alpha and 2 beta chains linked by disulfide bonds. The alpha chains contribute to the formation of the ligand-binding domain, while the beta chains carry the kinase domain (By similarity).</text>
</comment>
<comment type="subcellular location">
    <subcellularLocation>
        <location evidence="1">Membrane</location>
        <topology evidence="1">Single-pass type I membrane protein</topology>
    </subcellularLocation>
</comment>
<comment type="similarity">
    <text evidence="3">Belongs to the protein kinase superfamily. Tyr protein kinase family. Insulin receptor subfamily.</text>
</comment>
<protein>
    <recommendedName>
        <fullName>Insulin-like peptide receptor</fullName>
        <shortName>ILP receptor</shortName>
        <ecNumber>2.7.10.1</ecNumber>
    </recommendedName>
    <component>
        <recommendedName>
            <fullName>Insulin-like peptide receptor alpha chain</fullName>
        </recommendedName>
    </component>
    <component>
        <recommendedName>
            <fullName>Insulin-like peptide receptor beta chain</fullName>
        </recommendedName>
    </component>
</protein>
<dbReference type="EC" id="2.7.10.1"/>
<dbReference type="EMBL" id="S83394">
    <property type="protein sequence ID" value="AAB50848.1"/>
    <property type="molecule type" value="mRNA"/>
</dbReference>
<dbReference type="PIR" id="T43220">
    <property type="entry name" value="T43220"/>
</dbReference>
<dbReference type="SMR" id="O02466"/>
<dbReference type="BRENDA" id="2.7.10.1">
    <property type="organism ID" value="932"/>
</dbReference>
<dbReference type="GO" id="GO:0030424">
    <property type="term" value="C:axon"/>
    <property type="evidence" value="ECO:0007669"/>
    <property type="project" value="TreeGrafter"/>
</dbReference>
<dbReference type="GO" id="GO:0005899">
    <property type="term" value="C:insulin receptor complex"/>
    <property type="evidence" value="ECO:0007669"/>
    <property type="project" value="TreeGrafter"/>
</dbReference>
<dbReference type="GO" id="GO:0005524">
    <property type="term" value="F:ATP binding"/>
    <property type="evidence" value="ECO:0007669"/>
    <property type="project" value="UniProtKB-KW"/>
</dbReference>
<dbReference type="GO" id="GO:0005009">
    <property type="term" value="F:insulin receptor activity"/>
    <property type="evidence" value="ECO:0007669"/>
    <property type="project" value="TreeGrafter"/>
</dbReference>
<dbReference type="GO" id="GO:0043560">
    <property type="term" value="F:insulin receptor substrate binding"/>
    <property type="evidence" value="ECO:0007669"/>
    <property type="project" value="InterPro"/>
</dbReference>
<dbReference type="GO" id="GO:0046872">
    <property type="term" value="F:metal ion binding"/>
    <property type="evidence" value="ECO:0007669"/>
    <property type="project" value="UniProtKB-KW"/>
</dbReference>
<dbReference type="GO" id="GO:0043548">
    <property type="term" value="F:phosphatidylinositol 3-kinase binding"/>
    <property type="evidence" value="ECO:0007669"/>
    <property type="project" value="InterPro"/>
</dbReference>
<dbReference type="GO" id="GO:0042593">
    <property type="term" value="P:glucose homeostasis"/>
    <property type="evidence" value="ECO:0007669"/>
    <property type="project" value="TreeGrafter"/>
</dbReference>
<dbReference type="GO" id="GO:0043410">
    <property type="term" value="P:positive regulation of MAPK cascade"/>
    <property type="evidence" value="ECO:0007669"/>
    <property type="project" value="TreeGrafter"/>
</dbReference>
<dbReference type="GO" id="GO:0051897">
    <property type="term" value="P:positive regulation of phosphatidylinositol 3-kinase/protein kinase B signal transduction"/>
    <property type="evidence" value="ECO:0007669"/>
    <property type="project" value="TreeGrafter"/>
</dbReference>
<dbReference type="CDD" id="cd00063">
    <property type="entry name" value="FN3"/>
    <property type="match status" value="3"/>
</dbReference>
<dbReference type="CDD" id="cd00064">
    <property type="entry name" value="FU"/>
    <property type="match status" value="1"/>
</dbReference>
<dbReference type="CDD" id="cd05032">
    <property type="entry name" value="PTKc_InsR_like"/>
    <property type="match status" value="1"/>
</dbReference>
<dbReference type="FunFam" id="3.80.20.20:FF:000018">
    <property type="entry name" value="Insulin-like receptor"/>
    <property type="match status" value="1"/>
</dbReference>
<dbReference type="FunFam" id="1.10.510.10:FF:000528">
    <property type="entry name" value="Tyrosine-protein kinase receptor"/>
    <property type="match status" value="1"/>
</dbReference>
<dbReference type="FunFam" id="2.60.40.10:FF:000087">
    <property type="entry name" value="Tyrosine-protein kinase receptor"/>
    <property type="match status" value="1"/>
</dbReference>
<dbReference type="FunFam" id="3.30.200.20:FF:000026">
    <property type="entry name" value="Tyrosine-protein kinase receptor"/>
    <property type="match status" value="1"/>
</dbReference>
<dbReference type="FunFam" id="3.80.20.20:FF:000001">
    <property type="entry name" value="Tyrosine-protein kinase receptor"/>
    <property type="match status" value="1"/>
</dbReference>
<dbReference type="Gene3D" id="2.10.220.10">
    <property type="entry name" value="Hormone Receptor, Insulin-like Growth Factor Receptor 1, Chain A, domain 2"/>
    <property type="match status" value="1"/>
</dbReference>
<dbReference type="Gene3D" id="2.60.40.10">
    <property type="entry name" value="Immunoglobulins"/>
    <property type="match status" value="4"/>
</dbReference>
<dbReference type="Gene3D" id="3.30.200.20">
    <property type="entry name" value="Phosphorylase Kinase, domain 1"/>
    <property type="match status" value="1"/>
</dbReference>
<dbReference type="Gene3D" id="3.80.20.20">
    <property type="entry name" value="Receptor L-domain"/>
    <property type="match status" value="2"/>
</dbReference>
<dbReference type="Gene3D" id="1.10.510.10">
    <property type="entry name" value="Transferase(Phosphotransferase) domain 1"/>
    <property type="match status" value="1"/>
</dbReference>
<dbReference type="InterPro" id="IPR003961">
    <property type="entry name" value="FN3_dom"/>
</dbReference>
<dbReference type="InterPro" id="IPR036116">
    <property type="entry name" value="FN3_sf"/>
</dbReference>
<dbReference type="InterPro" id="IPR006211">
    <property type="entry name" value="Furin-like_Cys-rich_dom"/>
</dbReference>
<dbReference type="InterPro" id="IPR006212">
    <property type="entry name" value="Furin_repeat"/>
</dbReference>
<dbReference type="InterPro" id="IPR009030">
    <property type="entry name" value="Growth_fac_rcpt_cys_sf"/>
</dbReference>
<dbReference type="InterPro" id="IPR013783">
    <property type="entry name" value="Ig-like_fold"/>
</dbReference>
<dbReference type="InterPro" id="IPR011009">
    <property type="entry name" value="Kinase-like_dom_sf"/>
</dbReference>
<dbReference type="InterPro" id="IPR000719">
    <property type="entry name" value="Prot_kinase_dom"/>
</dbReference>
<dbReference type="InterPro" id="IPR017441">
    <property type="entry name" value="Protein_kinase_ATP_BS"/>
</dbReference>
<dbReference type="InterPro" id="IPR000494">
    <property type="entry name" value="Rcpt_L-dom"/>
</dbReference>
<dbReference type="InterPro" id="IPR036941">
    <property type="entry name" value="Rcpt_L-dom_sf"/>
</dbReference>
<dbReference type="InterPro" id="IPR050122">
    <property type="entry name" value="RTK"/>
</dbReference>
<dbReference type="InterPro" id="IPR001245">
    <property type="entry name" value="Ser-Thr/Tyr_kinase_cat_dom"/>
</dbReference>
<dbReference type="InterPro" id="IPR008266">
    <property type="entry name" value="Tyr_kinase_AS"/>
</dbReference>
<dbReference type="InterPro" id="IPR020635">
    <property type="entry name" value="Tyr_kinase_cat_dom"/>
</dbReference>
<dbReference type="InterPro" id="IPR016246">
    <property type="entry name" value="Tyr_kinase_insulin-like_rcpt"/>
</dbReference>
<dbReference type="InterPro" id="IPR002011">
    <property type="entry name" value="Tyr_kinase_rcpt_2_CS"/>
</dbReference>
<dbReference type="PANTHER" id="PTHR24416:SF525">
    <property type="entry name" value="INSULIN-LIKE RECEPTOR"/>
    <property type="match status" value="1"/>
</dbReference>
<dbReference type="PANTHER" id="PTHR24416">
    <property type="entry name" value="TYROSINE-PROTEIN KINASE RECEPTOR"/>
    <property type="match status" value="1"/>
</dbReference>
<dbReference type="Pfam" id="PF00041">
    <property type="entry name" value="fn3"/>
    <property type="match status" value="3"/>
</dbReference>
<dbReference type="Pfam" id="PF00757">
    <property type="entry name" value="Furin-like"/>
    <property type="match status" value="1"/>
</dbReference>
<dbReference type="Pfam" id="PF07714">
    <property type="entry name" value="PK_Tyr_Ser-Thr"/>
    <property type="match status" value="1"/>
</dbReference>
<dbReference type="Pfam" id="PF01030">
    <property type="entry name" value="Recep_L_domain"/>
    <property type="match status" value="2"/>
</dbReference>
<dbReference type="PIRSF" id="PIRSF000620">
    <property type="entry name" value="Insulin_receptor"/>
    <property type="match status" value="1"/>
</dbReference>
<dbReference type="PRINTS" id="PR00109">
    <property type="entry name" value="TYRKINASE"/>
</dbReference>
<dbReference type="SMART" id="SM00060">
    <property type="entry name" value="FN3"/>
    <property type="match status" value="3"/>
</dbReference>
<dbReference type="SMART" id="SM00261">
    <property type="entry name" value="FU"/>
    <property type="match status" value="1"/>
</dbReference>
<dbReference type="SMART" id="SM00219">
    <property type="entry name" value="TyrKc"/>
    <property type="match status" value="1"/>
</dbReference>
<dbReference type="SUPFAM" id="SSF49265">
    <property type="entry name" value="Fibronectin type III"/>
    <property type="match status" value="2"/>
</dbReference>
<dbReference type="SUPFAM" id="SSF57184">
    <property type="entry name" value="Growth factor receptor domain"/>
    <property type="match status" value="1"/>
</dbReference>
<dbReference type="SUPFAM" id="SSF52058">
    <property type="entry name" value="L domain-like"/>
    <property type="match status" value="2"/>
</dbReference>
<dbReference type="SUPFAM" id="SSF56112">
    <property type="entry name" value="Protein kinase-like (PK-like)"/>
    <property type="match status" value="1"/>
</dbReference>
<dbReference type="PROSITE" id="PS50853">
    <property type="entry name" value="FN3"/>
    <property type="match status" value="3"/>
</dbReference>
<dbReference type="PROSITE" id="PS00107">
    <property type="entry name" value="PROTEIN_KINASE_ATP"/>
    <property type="match status" value="1"/>
</dbReference>
<dbReference type="PROSITE" id="PS50011">
    <property type="entry name" value="PROTEIN_KINASE_DOM"/>
    <property type="match status" value="1"/>
</dbReference>
<dbReference type="PROSITE" id="PS00109">
    <property type="entry name" value="PROTEIN_KINASE_TYR"/>
    <property type="match status" value="1"/>
</dbReference>
<dbReference type="PROSITE" id="PS00239">
    <property type="entry name" value="RECEPTOR_TYR_KIN_II"/>
    <property type="match status" value="1"/>
</dbReference>
<sequence>MRVVDKMAGLMWAALTLVIGLGLLVPSNGEEYICDSMDIRNRVSNLRQLENCTVIEGYLQILLIDFAEEQDYSGLAFPNLVEITDYFLLYRVRGLTNLSELFPNLAVIRGTNLFFNYALVVFEMLDMQKIGLYSLQNITRGSVRIEKNPNLCYLDTIDWSFIAESGYSNNFIVDNREEEECVNFCPGRCRIKHPVLQDLCWAEEHCQKVCPESCLGNCRDGISGCCHENCIGGCDGPTERDCVACKYFVHNGECLIQCPPDTYQYKDRRCITEEECPNTTNSVWKLHHRKCIPECPSGYTTDINNPRLCTECEGQCPKSCKGGLVDSLAAAQRFRGCTIIEGELKISIRGGDNIIDELEENLGLIEEVGHYVAIVRSYALVTLDFLRSLKRIRGIQKENGYAFYVLDNRNLEKLFDWDRTDITIDEGKLFFHFNPKLCRHVILTMVDKVGLPEHAITDTDISTLTNGDQAQCSFSRLEIEEINTSKDMIILRWSEFRPPDPRDLLSYTVSYRETEDQGIDEYDGQDACGNTEWKEFDVSPTQTAHIITGLKPWTQYALLVKTYTKAGAREGSGAKSDIVYARTDADKPTHPQDVVVYSNSSNTLIITWKPPNRPNGNVTHYIVKYKRQQEDVAEMEQREYCKGGLKPHRPTQGLEDIVNNEEEPNNSTIGDGTCCECPKSEDEIRIEEEEAAFQQEFENFLHNNVYHKRENETRAGRRRRELPVTARPFYSNQTVNVTLPSTNRTVPPTPTPNPNPQLETTVWNEHMVVLTGLRHFSEYIIEVIACNADAAVGCSGSAVELARTQADDSADNIPGNITVVEIKEDMAKLYWPKPDSPNSMVVHYNIEYKKLGSDFNYEQQEPKCVENFKFLQSQGYTISNLVAGNYSVRFRATSFAGNGSWSNYVTFYVEEEDTSPDPQDPQQQVPVSLMIGMGVGFSLLLILAVIFGIWYCTKKRFGDKQMPNGVLYASVNPEYMSSDDVYVPDEWEVPREKITLIRELGQGSFGMVYEGEAKDVVKDEPMVSVAVKTVNESASIRERIEFLNEASVMKTFNCHHVVKLMGVVSKGQPTLVVMELMALGDLKNYLRRHRPEEDVGLSDSPASNEAKNSPFAENDNDLPPTFKDIIQMAGVIADGMSYLAAKKFVHRDLACRNCMVAQDRTVKIGDFGMTRDIYETDYYRKGGKGLLPVRWMSPESLKVGVFTSQSDVWSYGVVLWEMATLASQPYQGKSNEEVLKFVIDGGMLEKPEGCPNKLYDLMKLCWQYRQSMRPTFLEIVEILSPELQAHFNEVSFYHSLDNHGREPLEMDDVALDSGADTETEMYPSGSEFSSTPSPPSETPYSHMNGSHPQNGSMNLRIPKSTLC</sequence>
<reference key="1">
    <citation type="journal article" date="1996" name="Mol. Endocrinol.">
        <title>Structure and expression of the insulin-like peptide receptor from amphioxus.</title>
        <authorList>
            <person name="Pashmforoush M."/>
            <person name="Chan S.J."/>
            <person name="Steiner D.F."/>
        </authorList>
    </citation>
    <scope>NUCLEOTIDE SEQUENCE [MRNA]</scope>
</reference>